<reference key="1">
    <citation type="journal article" date="2005" name="Infect. Immun.">
        <title>Comparative genomic analysis of Chlamydia trachomatis oculotropic and genitotropic strains.</title>
        <authorList>
            <person name="Carlson J.H."/>
            <person name="Porcella S.F."/>
            <person name="McClarty G."/>
            <person name="Caldwell H.D."/>
        </authorList>
    </citation>
    <scope>NUCLEOTIDE SEQUENCE [LARGE SCALE GENOMIC DNA]</scope>
    <source>
        <strain>ATCC VR-571B / DSM 19440 / HAR-13</strain>
    </source>
</reference>
<organism>
    <name type="scientific">Chlamydia trachomatis serovar A (strain ATCC VR-571B / DSM 19440 / HAR-13)</name>
    <dbReference type="NCBI Taxonomy" id="315277"/>
    <lineage>
        <taxon>Bacteria</taxon>
        <taxon>Pseudomonadati</taxon>
        <taxon>Chlamydiota</taxon>
        <taxon>Chlamydiia</taxon>
        <taxon>Chlamydiales</taxon>
        <taxon>Chlamydiaceae</taxon>
        <taxon>Chlamydia/Chlamydophila group</taxon>
        <taxon>Chlamydia</taxon>
    </lineage>
</organism>
<evidence type="ECO:0000255" key="1">
    <source>
        <dbReference type="HAMAP-Rule" id="MF_00003"/>
    </source>
</evidence>
<dbReference type="EMBL" id="CP000051">
    <property type="protein sequence ID" value="AAX50347.1"/>
    <property type="molecule type" value="Genomic_DNA"/>
</dbReference>
<dbReference type="RefSeq" id="WP_011324565.1">
    <property type="nucleotide sequence ID" value="NC_007429.1"/>
</dbReference>
<dbReference type="SMR" id="Q3KMS5"/>
<dbReference type="KEGG" id="cta:CTA_0101"/>
<dbReference type="HOGENOM" id="CLU_089475_6_3_0"/>
<dbReference type="Proteomes" id="UP000002532">
    <property type="component" value="Chromosome"/>
</dbReference>
<dbReference type="GO" id="GO:0005829">
    <property type="term" value="C:cytosol"/>
    <property type="evidence" value="ECO:0007669"/>
    <property type="project" value="TreeGrafter"/>
</dbReference>
<dbReference type="GO" id="GO:0043024">
    <property type="term" value="F:ribosomal small subunit binding"/>
    <property type="evidence" value="ECO:0007669"/>
    <property type="project" value="TreeGrafter"/>
</dbReference>
<dbReference type="GO" id="GO:0030490">
    <property type="term" value="P:maturation of SSU-rRNA"/>
    <property type="evidence" value="ECO:0007669"/>
    <property type="project" value="UniProtKB-UniRule"/>
</dbReference>
<dbReference type="FunFam" id="3.30.300.20:FF:000040">
    <property type="entry name" value="Ribosome-binding factor A"/>
    <property type="match status" value="1"/>
</dbReference>
<dbReference type="Gene3D" id="3.30.300.20">
    <property type="match status" value="1"/>
</dbReference>
<dbReference type="HAMAP" id="MF_00003">
    <property type="entry name" value="RbfA"/>
    <property type="match status" value="1"/>
</dbReference>
<dbReference type="InterPro" id="IPR015946">
    <property type="entry name" value="KH_dom-like_a/b"/>
</dbReference>
<dbReference type="InterPro" id="IPR000238">
    <property type="entry name" value="RbfA"/>
</dbReference>
<dbReference type="InterPro" id="IPR023799">
    <property type="entry name" value="RbfA_dom_sf"/>
</dbReference>
<dbReference type="NCBIfam" id="TIGR00082">
    <property type="entry name" value="rbfA"/>
    <property type="match status" value="1"/>
</dbReference>
<dbReference type="PANTHER" id="PTHR33515">
    <property type="entry name" value="RIBOSOME-BINDING FACTOR A, CHLOROPLASTIC-RELATED"/>
    <property type="match status" value="1"/>
</dbReference>
<dbReference type="PANTHER" id="PTHR33515:SF1">
    <property type="entry name" value="RIBOSOME-BINDING FACTOR A, CHLOROPLASTIC-RELATED"/>
    <property type="match status" value="1"/>
</dbReference>
<dbReference type="Pfam" id="PF02033">
    <property type="entry name" value="RBFA"/>
    <property type="match status" value="1"/>
</dbReference>
<dbReference type="SUPFAM" id="SSF89919">
    <property type="entry name" value="Ribosome-binding factor A, RbfA"/>
    <property type="match status" value="1"/>
</dbReference>
<name>RBFA_CHLTA</name>
<proteinExistence type="inferred from homology"/>
<sequence length="123" mass="14075">MAENRRMKKVNAMLREAIAKVILKDVKHPKISNRWITITRVSLSRDLQSACVYVSIMPHENSQEETLAALKASAGFIAFQASKDLVLKYFPDLNFYLEDIFSPQDHIESLLLKIAEQDKKTNP</sequence>
<keyword id="KW-0963">Cytoplasm</keyword>
<keyword id="KW-0690">Ribosome biogenesis</keyword>
<accession>Q3KMS5</accession>
<feature type="chain" id="PRO_1000000091" description="Ribosome-binding factor A">
    <location>
        <begin position="1"/>
        <end position="123"/>
    </location>
</feature>
<gene>
    <name evidence="1" type="primary">rbfA</name>
    <name type="ordered locus">CTA_0101</name>
</gene>
<comment type="function">
    <text evidence="1">One of several proteins that assist in the late maturation steps of the functional core of the 30S ribosomal subunit. Associates with free 30S ribosomal subunits (but not with 30S subunits that are part of 70S ribosomes or polysomes). Required for efficient processing of 16S rRNA. May interact with the 5'-terminal helix region of 16S rRNA.</text>
</comment>
<comment type="subunit">
    <text evidence="1">Monomer. Binds 30S ribosomal subunits, but not 50S ribosomal subunits or 70S ribosomes.</text>
</comment>
<comment type="subcellular location">
    <subcellularLocation>
        <location evidence="1">Cytoplasm</location>
    </subcellularLocation>
</comment>
<comment type="similarity">
    <text evidence="1">Belongs to the RbfA family.</text>
</comment>
<protein>
    <recommendedName>
        <fullName evidence="1">Ribosome-binding factor A</fullName>
    </recommendedName>
</protein>